<proteinExistence type="inferred from homology"/>
<organism>
    <name type="scientific">Lachnoclostridium phytofermentans (strain ATCC 700394 / DSM 18823 / ISDg)</name>
    <name type="common">Clostridium phytofermentans</name>
    <dbReference type="NCBI Taxonomy" id="357809"/>
    <lineage>
        <taxon>Bacteria</taxon>
        <taxon>Bacillati</taxon>
        <taxon>Bacillota</taxon>
        <taxon>Clostridia</taxon>
        <taxon>Lachnospirales</taxon>
        <taxon>Lachnospiraceae</taxon>
    </lineage>
</organism>
<protein>
    <recommendedName>
        <fullName evidence="1">Small ribosomal subunit protein uS17</fullName>
    </recommendedName>
    <alternativeName>
        <fullName evidence="2">30S ribosomal protein S17</fullName>
    </alternativeName>
</protein>
<comment type="function">
    <text evidence="1">One of the primary rRNA binding proteins, it binds specifically to the 5'-end of 16S ribosomal RNA.</text>
</comment>
<comment type="subunit">
    <text evidence="1">Part of the 30S ribosomal subunit.</text>
</comment>
<comment type="similarity">
    <text evidence="1">Belongs to the universal ribosomal protein uS17 family.</text>
</comment>
<keyword id="KW-1185">Reference proteome</keyword>
<keyword id="KW-0687">Ribonucleoprotein</keyword>
<keyword id="KW-0689">Ribosomal protein</keyword>
<keyword id="KW-0694">RNA-binding</keyword>
<keyword id="KW-0699">rRNA-binding</keyword>
<dbReference type="EMBL" id="CP000885">
    <property type="protein sequence ID" value="ABX44005.1"/>
    <property type="molecule type" value="Genomic_DNA"/>
</dbReference>
<dbReference type="RefSeq" id="WP_012201653.1">
    <property type="nucleotide sequence ID" value="NC_010001.1"/>
</dbReference>
<dbReference type="SMR" id="A9KJI5"/>
<dbReference type="STRING" id="357809.Cphy_3658"/>
<dbReference type="KEGG" id="cpy:Cphy_3658"/>
<dbReference type="eggNOG" id="COG0186">
    <property type="taxonomic scope" value="Bacteria"/>
</dbReference>
<dbReference type="HOGENOM" id="CLU_073626_1_0_9"/>
<dbReference type="OrthoDB" id="9811714at2"/>
<dbReference type="Proteomes" id="UP000000370">
    <property type="component" value="Chromosome"/>
</dbReference>
<dbReference type="GO" id="GO:0022627">
    <property type="term" value="C:cytosolic small ribosomal subunit"/>
    <property type="evidence" value="ECO:0007669"/>
    <property type="project" value="TreeGrafter"/>
</dbReference>
<dbReference type="GO" id="GO:0019843">
    <property type="term" value="F:rRNA binding"/>
    <property type="evidence" value="ECO:0007669"/>
    <property type="project" value="UniProtKB-UniRule"/>
</dbReference>
<dbReference type="GO" id="GO:0003735">
    <property type="term" value="F:structural constituent of ribosome"/>
    <property type="evidence" value="ECO:0007669"/>
    <property type="project" value="InterPro"/>
</dbReference>
<dbReference type="GO" id="GO:0006412">
    <property type="term" value="P:translation"/>
    <property type="evidence" value="ECO:0007669"/>
    <property type="project" value="UniProtKB-UniRule"/>
</dbReference>
<dbReference type="CDD" id="cd00364">
    <property type="entry name" value="Ribosomal_uS17"/>
    <property type="match status" value="1"/>
</dbReference>
<dbReference type="FunFam" id="2.40.50.140:FF:000123">
    <property type="entry name" value="30S ribosomal protein S17"/>
    <property type="match status" value="1"/>
</dbReference>
<dbReference type="Gene3D" id="2.40.50.140">
    <property type="entry name" value="Nucleic acid-binding proteins"/>
    <property type="match status" value="1"/>
</dbReference>
<dbReference type="HAMAP" id="MF_01345_B">
    <property type="entry name" value="Ribosomal_uS17_B"/>
    <property type="match status" value="1"/>
</dbReference>
<dbReference type="InterPro" id="IPR012340">
    <property type="entry name" value="NA-bd_OB-fold"/>
</dbReference>
<dbReference type="InterPro" id="IPR000266">
    <property type="entry name" value="Ribosomal_uS17"/>
</dbReference>
<dbReference type="InterPro" id="IPR019984">
    <property type="entry name" value="Ribosomal_uS17_bact/chlr"/>
</dbReference>
<dbReference type="InterPro" id="IPR019979">
    <property type="entry name" value="Ribosomal_uS17_CS"/>
</dbReference>
<dbReference type="NCBIfam" id="NF004123">
    <property type="entry name" value="PRK05610.1"/>
    <property type="match status" value="1"/>
</dbReference>
<dbReference type="NCBIfam" id="TIGR03635">
    <property type="entry name" value="uS17_bact"/>
    <property type="match status" value="1"/>
</dbReference>
<dbReference type="PANTHER" id="PTHR10744">
    <property type="entry name" value="40S RIBOSOMAL PROTEIN S11 FAMILY MEMBER"/>
    <property type="match status" value="1"/>
</dbReference>
<dbReference type="PANTHER" id="PTHR10744:SF1">
    <property type="entry name" value="SMALL RIBOSOMAL SUBUNIT PROTEIN US17M"/>
    <property type="match status" value="1"/>
</dbReference>
<dbReference type="Pfam" id="PF00366">
    <property type="entry name" value="Ribosomal_S17"/>
    <property type="match status" value="1"/>
</dbReference>
<dbReference type="PRINTS" id="PR00973">
    <property type="entry name" value="RIBOSOMALS17"/>
</dbReference>
<dbReference type="SUPFAM" id="SSF50249">
    <property type="entry name" value="Nucleic acid-binding proteins"/>
    <property type="match status" value="1"/>
</dbReference>
<dbReference type="PROSITE" id="PS00056">
    <property type="entry name" value="RIBOSOMAL_S17"/>
    <property type="match status" value="1"/>
</dbReference>
<sequence length="85" mass="9975">MVERNLRKTRTGKVVSDKMDKTIVVAVVDNVKHPLYGKIVKRTYKLKAHDENNECQIGDRVKVMETRPLSKDKRWRLVEIIEKAK</sequence>
<name>RS17_LACP7</name>
<accession>A9KJI5</accession>
<reference key="1">
    <citation type="submission" date="2007-11" db="EMBL/GenBank/DDBJ databases">
        <title>Complete genome sequence of Clostridium phytofermentans ISDg.</title>
        <authorList>
            <person name="Leschine S.B."/>
            <person name="Warnick T.A."/>
            <person name="Blanchard J.L."/>
            <person name="Schnell D.J."/>
            <person name="Petit E.L."/>
            <person name="LaTouf W.G."/>
            <person name="Copeland A."/>
            <person name="Lucas S."/>
            <person name="Lapidus A."/>
            <person name="Barry K."/>
            <person name="Glavina del Rio T."/>
            <person name="Dalin E."/>
            <person name="Tice H."/>
            <person name="Pitluck S."/>
            <person name="Kiss H."/>
            <person name="Brettin T."/>
            <person name="Bruce D."/>
            <person name="Detter J.C."/>
            <person name="Han C."/>
            <person name="Kuske C."/>
            <person name="Schmutz J."/>
            <person name="Larimer F."/>
            <person name="Land M."/>
            <person name="Hauser L."/>
            <person name="Kyrpides N."/>
            <person name="Kim E.A."/>
            <person name="Richardson P."/>
        </authorList>
    </citation>
    <scope>NUCLEOTIDE SEQUENCE [LARGE SCALE GENOMIC DNA]</scope>
    <source>
        <strain>ATCC 700394 / DSM 18823 / ISDg</strain>
    </source>
</reference>
<evidence type="ECO:0000255" key="1">
    <source>
        <dbReference type="HAMAP-Rule" id="MF_01345"/>
    </source>
</evidence>
<evidence type="ECO:0000305" key="2"/>
<gene>
    <name evidence="1" type="primary">rpsQ</name>
    <name type="ordered locus">Cphy_3658</name>
</gene>
<feature type="chain" id="PRO_1000166472" description="Small ribosomal subunit protein uS17">
    <location>
        <begin position="1"/>
        <end position="85"/>
    </location>
</feature>